<proteinExistence type="inferred from homology"/>
<name>RNP2_METMA</name>
<feature type="chain" id="PRO_0000140022" description="Ribonuclease P protein component 2">
    <location>
        <begin position="1"/>
        <end position="116"/>
    </location>
</feature>
<dbReference type="EC" id="3.1.26.5" evidence="1"/>
<dbReference type="EMBL" id="AE008384">
    <property type="protein sequence ID" value="AAM32315.1"/>
    <property type="molecule type" value="Genomic_DNA"/>
</dbReference>
<dbReference type="RefSeq" id="WP_011034532.1">
    <property type="nucleotide sequence ID" value="NC_003901.1"/>
</dbReference>
<dbReference type="SMR" id="Q8PTU2"/>
<dbReference type="KEGG" id="mma:MM_2619"/>
<dbReference type="PATRIC" id="fig|192952.21.peg.3012"/>
<dbReference type="eggNOG" id="arCOG01365">
    <property type="taxonomic scope" value="Archaea"/>
</dbReference>
<dbReference type="HOGENOM" id="CLU_137733_1_0_2"/>
<dbReference type="Proteomes" id="UP000000595">
    <property type="component" value="Chromosome"/>
</dbReference>
<dbReference type="GO" id="GO:0005737">
    <property type="term" value="C:cytoplasm"/>
    <property type="evidence" value="ECO:0007669"/>
    <property type="project" value="UniProtKB-SubCell"/>
</dbReference>
<dbReference type="GO" id="GO:0030677">
    <property type="term" value="C:ribonuclease P complex"/>
    <property type="evidence" value="ECO:0007669"/>
    <property type="project" value="UniProtKB-UniRule"/>
</dbReference>
<dbReference type="GO" id="GO:0004526">
    <property type="term" value="F:ribonuclease P activity"/>
    <property type="evidence" value="ECO:0007669"/>
    <property type="project" value="UniProtKB-UniRule"/>
</dbReference>
<dbReference type="GO" id="GO:0001682">
    <property type="term" value="P:tRNA 5'-leader removal"/>
    <property type="evidence" value="ECO:0007669"/>
    <property type="project" value="UniProtKB-UniRule"/>
</dbReference>
<dbReference type="Gene3D" id="3.30.70.3250">
    <property type="entry name" value="Ribonuclease P, Pop5 subunit"/>
    <property type="match status" value="1"/>
</dbReference>
<dbReference type="HAMAP" id="MF_00755">
    <property type="entry name" value="RNase_P_2"/>
    <property type="match status" value="1"/>
</dbReference>
<dbReference type="InterPro" id="IPR002759">
    <property type="entry name" value="Pop5/Rpp14/Rnp2-like"/>
</dbReference>
<dbReference type="InterPro" id="IPR038085">
    <property type="entry name" value="Rnp2-like_sf"/>
</dbReference>
<dbReference type="InterPro" id="IPR016434">
    <property type="entry name" value="Rnp2_archaea"/>
</dbReference>
<dbReference type="PANTHER" id="PTHR15441">
    <property type="entry name" value="RIBONUCLEASE P PROTEIN SUBUNIT P14"/>
    <property type="match status" value="1"/>
</dbReference>
<dbReference type="PANTHER" id="PTHR15441:SF2">
    <property type="entry name" value="RIBONUCLEASE P_MRP PROTEIN SUBUNIT POP5"/>
    <property type="match status" value="1"/>
</dbReference>
<dbReference type="Pfam" id="PF01900">
    <property type="entry name" value="RNase_P_Rpp14"/>
    <property type="match status" value="1"/>
</dbReference>
<dbReference type="PIRSF" id="PIRSF004952">
    <property type="entry name" value="RNase_P_2"/>
    <property type="match status" value="1"/>
</dbReference>
<dbReference type="SUPFAM" id="SSF160350">
    <property type="entry name" value="Rnp2-like"/>
    <property type="match status" value="1"/>
</dbReference>
<accession>Q8PTU2</accession>
<keyword id="KW-0963">Cytoplasm</keyword>
<keyword id="KW-0255">Endonuclease</keyword>
<keyword id="KW-0378">Hydrolase</keyword>
<keyword id="KW-0540">Nuclease</keyword>
<keyword id="KW-0819">tRNA processing</keyword>
<reference key="1">
    <citation type="journal article" date="2002" name="J. Mol. Microbiol. Biotechnol.">
        <title>The genome of Methanosarcina mazei: evidence for lateral gene transfer between Bacteria and Archaea.</title>
        <authorList>
            <person name="Deppenmeier U."/>
            <person name="Johann A."/>
            <person name="Hartsch T."/>
            <person name="Merkl R."/>
            <person name="Schmitz R.A."/>
            <person name="Martinez-Arias R."/>
            <person name="Henne A."/>
            <person name="Wiezer A."/>
            <person name="Baeumer S."/>
            <person name="Jacobi C."/>
            <person name="Brueggemann H."/>
            <person name="Lienard T."/>
            <person name="Christmann A."/>
            <person name="Boemecke M."/>
            <person name="Steckel S."/>
            <person name="Bhattacharyya A."/>
            <person name="Lykidis A."/>
            <person name="Overbeek R."/>
            <person name="Klenk H.-P."/>
            <person name="Gunsalus R.P."/>
            <person name="Fritz H.-J."/>
            <person name="Gottschalk G."/>
        </authorList>
    </citation>
    <scope>NUCLEOTIDE SEQUENCE [LARGE SCALE GENOMIC DNA]</scope>
    <source>
        <strain>ATCC BAA-159 / DSM 3647 / Goe1 / Go1 / JCM 11833 / OCM 88</strain>
    </source>
</reference>
<evidence type="ECO:0000255" key="1">
    <source>
        <dbReference type="HAMAP-Rule" id="MF_00755"/>
    </source>
</evidence>
<gene>
    <name evidence="1" type="primary">rnp2</name>
    <name type="ordered locus">MM_2619</name>
</gene>
<sequence>MKRLLPSLRAKKRYLAFELISEEPASRSDIVKEVMSSASSLLGDVTTSDCDIRVLGFENGKGIIQCSHTKVKQTRASLAALTRINGKRATLHVLGVSGTVKRATEKFLQDEGVFSS</sequence>
<comment type="function">
    <text evidence="1">Part of ribonuclease P, a protein complex that generates mature tRNA molecules by cleaving their 5'-ends.</text>
</comment>
<comment type="catalytic activity">
    <reaction evidence="1">
        <text>Endonucleolytic cleavage of RNA, removing 5'-extranucleotides from tRNA precursor.</text>
        <dbReference type="EC" id="3.1.26.5"/>
    </reaction>
</comment>
<comment type="subunit">
    <text evidence="1">Consists of a catalytic RNA component and at least 4-5 protein subunits.</text>
</comment>
<comment type="subcellular location">
    <subcellularLocation>
        <location evidence="1">Cytoplasm</location>
    </subcellularLocation>
</comment>
<comment type="similarity">
    <text evidence="1">Belongs to the eukaryotic/archaeal RNase P protein component 2 family.</text>
</comment>
<protein>
    <recommendedName>
        <fullName evidence="1">Ribonuclease P protein component 2</fullName>
        <shortName evidence="1">RNase P component 2</shortName>
        <ecNumber evidence="1">3.1.26.5</ecNumber>
    </recommendedName>
    <alternativeName>
        <fullName evidence="1">Pop5</fullName>
    </alternativeName>
</protein>
<organism>
    <name type="scientific">Methanosarcina mazei (strain ATCC BAA-159 / DSM 3647 / Goe1 / Go1 / JCM 11833 / OCM 88)</name>
    <name type="common">Methanosarcina frisia</name>
    <dbReference type="NCBI Taxonomy" id="192952"/>
    <lineage>
        <taxon>Archaea</taxon>
        <taxon>Methanobacteriati</taxon>
        <taxon>Methanobacteriota</taxon>
        <taxon>Stenosarchaea group</taxon>
        <taxon>Methanomicrobia</taxon>
        <taxon>Methanosarcinales</taxon>
        <taxon>Methanosarcinaceae</taxon>
        <taxon>Methanosarcina</taxon>
    </lineage>
</organism>